<feature type="chain" id="PRO_0000091063" description="Elongation factor G">
    <location>
        <begin position="1"/>
        <end position="692"/>
    </location>
</feature>
<feature type="domain" description="tr-type G">
    <location>
        <begin position="8"/>
        <end position="282"/>
    </location>
</feature>
<feature type="binding site" evidence="1">
    <location>
        <begin position="17"/>
        <end position="24"/>
    </location>
    <ligand>
        <name>GTP</name>
        <dbReference type="ChEBI" id="CHEBI:37565"/>
    </ligand>
</feature>
<feature type="binding site" evidence="1">
    <location>
        <begin position="81"/>
        <end position="85"/>
    </location>
    <ligand>
        <name>GTP</name>
        <dbReference type="ChEBI" id="CHEBI:37565"/>
    </ligand>
</feature>
<feature type="binding site" evidence="1">
    <location>
        <begin position="135"/>
        <end position="138"/>
    </location>
    <ligand>
        <name>GTP</name>
        <dbReference type="ChEBI" id="CHEBI:37565"/>
    </ligand>
</feature>
<evidence type="ECO:0000255" key="1">
    <source>
        <dbReference type="HAMAP-Rule" id="MF_00054"/>
    </source>
</evidence>
<protein>
    <recommendedName>
        <fullName evidence="1">Elongation factor G</fullName>
        <shortName evidence="1">EF-G</shortName>
    </recommendedName>
</protein>
<proteinExistence type="inferred from homology"/>
<gene>
    <name evidence="1" type="primary">fusA</name>
    <name type="ordered locus">BC_0128</name>
</gene>
<accession>Q814C5</accession>
<organism>
    <name type="scientific">Bacillus cereus (strain ATCC 14579 / DSM 31 / CCUG 7414 / JCM 2152 / NBRC 15305 / NCIMB 9373 / NCTC 2599 / NRRL B-3711)</name>
    <dbReference type="NCBI Taxonomy" id="226900"/>
    <lineage>
        <taxon>Bacteria</taxon>
        <taxon>Bacillati</taxon>
        <taxon>Bacillota</taxon>
        <taxon>Bacilli</taxon>
        <taxon>Bacillales</taxon>
        <taxon>Bacillaceae</taxon>
        <taxon>Bacillus</taxon>
        <taxon>Bacillus cereus group</taxon>
    </lineage>
</organism>
<name>EFG_BACCR</name>
<sequence length="692" mass="76325">MAREFSLENTRNIGIMAHIDAGKTTATERILYYTGRIHKIGETHEGASQMDWMEQEQERGITITSAATTAQWKGHRVNIIDTPGHVDFTVEVERSLRVLDGAVAVLDAQSGVEPQTETVWRQATTYGVPRIVFVNKMDKIGADFLYSVGTIHDRLQANAHPIQLPIGAEDEFNGIIDLVEECAYMYGNDLGTDIQRVEIPEEHKELAEEYRGKLIEAVAELDEEMMMKYLEGEEITVEELKAGIRKATTSVEFFPVICGSAFKNKGVQILLDAVIDYLPSPLDVPAIKGTLPDTDEEVERKSSDEEPFAALAFKIMTDPYVGKLTFFRVYSGVLNSGSYVKNSTKGKRERVGRILQMHANSREEISTVYAGDIAAAVGLKDTTTGDTLCDEKSLVILESMEFPEPVISVAIEPKSKADQDKMGTALSKLSEEDPTFRAHTDQETGQTIIAGMGELHLDIIVDRMRREFKVEANVGAPQVAYRETFRAAAKVEGKFARQSGGRGQFGHVWIEFEPNEEGKGFEFENKIVGGVVPREYIPAVGAGLEDALKNGVLAGYPLVDIKAALVDGSYHDVDSSEMAFKIAASMALKAAVSKCSPVILEPMMKVEVVIPEEYMGDIMGDVTSRRGRVEGMEARGNAQVVRAMVPLSEMFGYATSLRSNTQGRGTFSMVFDHYEEVPKSVSEEIIKKNKGE</sequence>
<reference key="1">
    <citation type="journal article" date="2003" name="Nature">
        <title>Genome sequence of Bacillus cereus and comparative analysis with Bacillus anthracis.</title>
        <authorList>
            <person name="Ivanova N."/>
            <person name="Sorokin A."/>
            <person name="Anderson I."/>
            <person name="Galleron N."/>
            <person name="Candelon B."/>
            <person name="Kapatral V."/>
            <person name="Bhattacharyya A."/>
            <person name="Reznik G."/>
            <person name="Mikhailova N."/>
            <person name="Lapidus A."/>
            <person name="Chu L."/>
            <person name="Mazur M."/>
            <person name="Goltsman E."/>
            <person name="Larsen N."/>
            <person name="D'Souza M."/>
            <person name="Walunas T."/>
            <person name="Grechkin Y."/>
            <person name="Pusch G."/>
            <person name="Haselkorn R."/>
            <person name="Fonstein M."/>
            <person name="Ehrlich S.D."/>
            <person name="Overbeek R."/>
            <person name="Kyrpides N.C."/>
        </authorList>
    </citation>
    <scope>NUCLEOTIDE SEQUENCE [LARGE SCALE GENOMIC DNA]</scope>
    <source>
        <strain>ATCC 14579 / DSM 31 / CCUG 7414 / JCM 2152 / NBRC 15305 / NCIMB 9373 / NCTC 2599 / NRRL B-3711</strain>
    </source>
</reference>
<keyword id="KW-0963">Cytoplasm</keyword>
<keyword id="KW-0251">Elongation factor</keyword>
<keyword id="KW-0342">GTP-binding</keyword>
<keyword id="KW-0547">Nucleotide-binding</keyword>
<keyword id="KW-0648">Protein biosynthesis</keyword>
<keyword id="KW-1185">Reference proteome</keyword>
<dbReference type="EMBL" id="AE016877">
    <property type="protein sequence ID" value="AAP07209.1"/>
    <property type="molecule type" value="Genomic_DNA"/>
</dbReference>
<dbReference type="RefSeq" id="NP_830008.1">
    <property type="nucleotide sequence ID" value="NC_004722.1"/>
</dbReference>
<dbReference type="RefSeq" id="WP_000090370.1">
    <property type="nucleotide sequence ID" value="NZ_CP138336.1"/>
</dbReference>
<dbReference type="SMR" id="Q814C5"/>
<dbReference type="STRING" id="226900.BC_0128"/>
<dbReference type="MetOSite" id="Q814C5"/>
<dbReference type="GeneID" id="93010946"/>
<dbReference type="KEGG" id="bce:BC0128"/>
<dbReference type="PATRIC" id="fig|226900.8.peg.129"/>
<dbReference type="HOGENOM" id="CLU_002794_4_1_9"/>
<dbReference type="OrthoDB" id="9804431at2"/>
<dbReference type="Proteomes" id="UP000001417">
    <property type="component" value="Chromosome"/>
</dbReference>
<dbReference type="GO" id="GO:0005737">
    <property type="term" value="C:cytoplasm"/>
    <property type="evidence" value="ECO:0007669"/>
    <property type="project" value="UniProtKB-SubCell"/>
</dbReference>
<dbReference type="GO" id="GO:0005525">
    <property type="term" value="F:GTP binding"/>
    <property type="evidence" value="ECO:0007669"/>
    <property type="project" value="UniProtKB-UniRule"/>
</dbReference>
<dbReference type="GO" id="GO:0003924">
    <property type="term" value="F:GTPase activity"/>
    <property type="evidence" value="ECO:0007669"/>
    <property type="project" value="InterPro"/>
</dbReference>
<dbReference type="GO" id="GO:0003746">
    <property type="term" value="F:translation elongation factor activity"/>
    <property type="evidence" value="ECO:0007669"/>
    <property type="project" value="UniProtKB-UniRule"/>
</dbReference>
<dbReference type="GO" id="GO:0032790">
    <property type="term" value="P:ribosome disassembly"/>
    <property type="evidence" value="ECO:0000318"/>
    <property type="project" value="GO_Central"/>
</dbReference>
<dbReference type="CDD" id="cd01886">
    <property type="entry name" value="EF-G"/>
    <property type="match status" value="1"/>
</dbReference>
<dbReference type="CDD" id="cd16262">
    <property type="entry name" value="EFG_III"/>
    <property type="match status" value="1"/>
</dbReference>
<dbReference type="CDD" id="cd01434">
    <property type="entry name" value="EFG_mtEFG1_IV"/>
    <property type="match status" value="1"/>
</dbReference>
<dbReference type="CDD" id="cd03713">
    <property type="entry name" value="EFG_mtEFG_C"/>
    <property type="match status" value="1"/>
</dbReference>
<dbReference type="CDD" id="cd04088">
    <property type="entry name" value="EFG_mtEFG_II"/>
    <property type="match status" value="1"/>
</dbReference>
<dbReference type="FunFam" id="2.40.30.10:FF:000006">
    <property type="entry name" value="Elongation factor G"/>
    <property type="match status" value="1"/>
</dbReference>
<dbReference type="FunFam" id="3.30.230.10:FF:000003">
    <property type="entry name" value="Elongation factor G"/>
    <property type="match status" value="1"/>
</dbReference>
<dbReference type="FunFam" id="3.30.70.240:FF:000001">
    <property type="entry name" value="Elongation factor G"/>
    <property type="match status" value="1"/>
</dbReference>
<dbReference type="FunFam" id="3.30.70.870:FF:000001">
    <property type="entry name" value="Elongation factor G"/>
    <property type="match status" value="1"/>
</dbReference>
<dbReference type="FunFam" id="3.40.50.300:FF:000029">
    <property type="entry name" value="Elongation factor G"/>
    <property type="match status" value="1"/>
</dbReference>
<dbReference type="Gene3D" id="3.30.230.10">
    <property type="match status" value="1"/>
</dbReference>
<dbReference type="Gene3D" id="3.30.70.240">
    <property type="match status" value="1"/>
</dbReference>
<dbReference type="Gene3D" id="3.30.70.870">
    <property type="entry name" value="Elongation Factor G (Translational Gtpase), domain 3"/>
    <property type="match status" value="1"/>
</dbReference>
<dbReference type="Gene3D" id="3.40.50.300">
    <property type="entry name" value="P-loop containing nucleotide triphosphate hydrolases"/>
    <property type="match status" value="1"/>
</dbReference>
<dbReference type="Gene3D" id="2.40.30.10">
    <property type="entry name" value="Translation factors"/>
    <property type="match status" value="1"/>
</dbReference>
<dbReference type="HAMAP" id="MF_00054_B">
    <property type="entry name" value="EF_G_EF_2_B"/>
    <property type="match status" value="1"/>
</dbReference>
<dbReference type="InterPro" id="IPR041095">
    <property type="entry name" value="EFG_II"/>
</dbReference>
<dbReference type="InterPro" id="IPR009022">
    <property type="entry name" value="EFG_III"/>
</dbReference>
<dbReference type="InterPro" id="IPR035647">
    <property type="entry name" value="EFG_III/V"/>
</dbReference>
<dbReference type="InterPro" id="IPR047872">
    <property type="entry name" value="EFG_IV"/>
</dbReference>
<dbReference type="InterPro" id="IPR035649">
    <property type="entry name" value="EFG_V"/>
</dbReference>
<dbReference type="InterPro" id="IPR000640">
    <property type="entry name" value="EFG_V-like"/>
</dbReference>
<dbReference type="InterPro" id="IPR004161">
    <property type="entry name" value="EFTu-like_2"/>
</dbReference>
<dbReference type="InterPro" id="IPR031157">
    <property type="entry name" value="G_TR_CS"/>
</dbReference>
<dbReference type="InterPro" id="IPR027417">
    <property type="entry name" value="P-loop_NTPase"/>
</dbReference>
<dbReference type="InterPro" id="IPR020568">
    <property type="entry name" value="Ribosomal_Su5_D2-typ_SF"/>
</dbReference>
<dbReference type="InterPro" id="IPR014721">
    <property type="entry name" value="Ribsml_uS5_D2-typ_fold_subgr"/>
</dbReference>
<dbReference type="InterPro" id="IPR005225">
    <property type="entry name" value="Small_GTP-bd"/>
</dbReference>
<dbReference type="InterPro" id="IPR000795">
    <property type="entry name" value="T_Tr_GTP-bd_dom"/>
</dbReference>
<dbReference type="InterPro" id="IPR009000">
    <property type="entry name" value="Transl_B-barrel_sf"/>
</dbReference>
<dbReference type="InterPro" id="IPR004540">
    <property type="entry name" value="Transl_elong_EFG/EF2"/>
</dbReference>
<dbReference type="InterPro" id="IPR005517">
    <property type="entry name" value="Transl_elong_EFG/EF2_IV"/>
</dbReference>
<dbReference type="NCBIfam" id="TIGR00484">
    <property type="entry name" value="EF-G"/>
    <property type="match status" value="1"/>
</dbReference>
<dbReference type="NCBIfam" id="NF009379">
    <property type="entry name" value="PRK12740.1-3"/>
    <property type="match status" value="1"/>
</dbReference>
<dbReference type="NCBIfam" id="NF009381">
    <property type="entry name" value="PRK12740.1-5"/>
    <property type="match status" value="1"/>
</dbReference>
<dbReference type="NCBIfam" id="NF009891">
    <property type="entry name" value="PRK13351.1-1"/>
    <property type="match status" value="1"/>
</dbReference>
<dbReference type="NCBIfam" id="TIGR00231">
    <property type="entry name" value="small_GTP"/>
    <property type="match status" value="1"/>
</dbReference>
<dbReference type="PANTHER" id="PTHR43261:SF1">
    <property type="entry name" value="RIBOSOME-RELEASING FACTOR 2, MITOCHONDRIAL"/>
    <property type="match status" value="1"/>
</dbReference>
<dbReference type="PANTHER" id="PTHR43261">
    <property type="entry name" value="TRANSLATION ELONGATION FACTOR G-RELATED"/>
    <property type="match status" value="1"/>
</dbReference>
<dbReference type="Pfam" id="PF00679">
    <property type="entry name" value="EFG_C"/>
    <property type="match status" value="1"/>
</dbReference>
<dbReference type="Pfam" id="PF14492">
    <property type="entry name" value="EFG_III"/>
    <property type="match status" value="1"/>
</dbReference>
<dbReference type="Pfam" id="PF03764">
    <property type="entry name" value="EFG_IV"/>
    <property type="match status" value="1"/>
</dbReference>
<dbReference type="Pfam" id="PF00009">
    <property type="entry name" value="GTP_EFTU"/>
    <property type="match status" value="1"/>
</dbReference>
<dbReference type="Pfam" id="PF03144">
    <property type="entry name" value="GTP_EFTU_D2"/>
    <property type="match status" value="1"/>
</dbReference>
<dbReference type="PRINTS" id="PR00315">
    <property type="entry name" value="ELONGATNFCT"/>
</dbReference>
<dbReference type="SMART" id="SM00838">
    <property type="entry name" value="EFG_C"/>
    <property type="match status" value="1"/>
</dbReference>
<dbReference type="SMART" id="SM00889">
    <property type="entry name" value="EFG_IV"/>
    <property type="match status" value="1"/>
</dbReference>
<dbReference type="SUPFAM" id="SSF54980">
    <property type="entry name" value="EF-G C-terminal domain-like"/>
    <property type="match status" value="2"/>
</dbReference>
<dbReference type="SUPFAM" id="SSF52540">
    <property type="entry name" value="P-loop containing nucleoside triphosphate hydrolases"/>
    <property type="match status" value="1"/>
</dbReference>
<dbReference type="SUPFAM" id="SSF54211">
    <property type="entry name" value="Ribosomal protein S5 domain 2-like"/>
    <property type="match status" value="1"/>
</dbReference>
<dbReference type="SUPFAM" id="SSF50447">
    <property type="entry name" value="Translation proteins"/>
    <property type="match status" value="1"/>
</dbReference>
<dbReference type="PROSITE" id="PS00301">
    <property type="entry name" value="G_TR_1"/>
    <property type="match status" value="1"/>
</dbReference>
<dbReference type="PROSITE" id="PS51722">
    <property type="entry name" value="G_TR_2"/>
    <property type="match status" value="1"/>
</dbReference>
<comment type="function">
    <text evidence="1">Catalyzes the GTP-dependent ribosomal translocation step during translation elongation. During this step, the ribosome changes from the pre-translocational (PRE) to the post-translocational (POST) state as the newly formed A-site-bound peptidyl-tRNA and P-site-bound deacylated tRNA move to the P and E sites, respectively. Catalyzes the coordinated movement of the two tRNA molecules, the mRNA and conformational changes in the ribosome.</text>
</comment>
<comment type="subcellular location">
    <subcellularLocation>
        <location evidence="1">Cytoplasm</location>
    </subcellularLocation>
</comment>
<comment type="similarity">
    <text evidence="1">Belongs to the TRAFAC class translation factor GTPase superfamily. Classic translation factor GTPase family. EF-G/EF-2 subfamily.</text>
</comment>